<name>CYB_AKOLI</name>
<feature type="chain" id="PRO_0000254975" description="Cytochrome b">
    <location>
        <begin position="1"/>
        <end position="379"/>
    </location>
</feature>
<feature type="transmembrane region" description="Helical" evidence="2">
    <location>
        <begin position="33"/>
        <end position="53"/>
    </location>
</feature>
<feature type="transmembrane region" description="Helical" evidence="2">
    <location>
        <begin position="77"/>
        <end position="98"/>
    </location>
</feature>
<feature type="transmembrane region" description="Helical" evidence="2">
    <location>
        <begin position="113"/>
        <end position="133"/>
    </location>
</feature>
<feature type="transmembrane region" description="Helical" evidence="2">
    <location>
        <begin position="178"/>
        <end position="198"/>
    </location>
</feature>
<feature type="transmembrane region" description="Helical" evidence="2">
    <location>
        <begin position="226"/>
        <end position="246"/>
    </location>
</feature>
<feature type="transmembrane region" description="Helical" evidence="2">
    <location>
        <begin position="288"/>
        <end position="308"/>
    </location>
</feature>
<feature type="transmembrane region" description="Helical" evidence="2">
    <location>
        <begin position="320"/>
        <end position="340"/>
    </location>
</feature>
<feature type="transmembrane region" description="Helical" evidence="2">
    <location>
        <begin position="347"/>
        <end position="367"/>
    </location>
</feature>
<feature type="binding site" description="axial binding residue" evidence="2">
    <location>
        <position position="83"/>
    </location>
    <ligand>
        <name>heme b</name>
        <dbReference type="ChEBI" id="CHEBI:60344"/>
        <label>b562</label>
    </ligand>
    <ligandPart>
        <name>Fe</name>
        <dbReference type="ChEBI" id="CHEBI:18248"/>
    </ligandPart>
</feature>
<feature type="binding site" description="axial binding residue" evidence="2">
    <location>
        <position position="97"/>
    </location>
    <ligand>
        <name>heme b</name>
        <dbReference type="ChEBI" id="CHEBI:60344"/>
        <label>b566</label>
    </ligand>
    <ligandPart>
        <name>Fe</name>
        <dbReference type="ChEBI" id="CHEBI:18248"/>
    </ligandPart>
</feature>
<feature type="binding site" description="axial binding residue" evidence="2">
    <location>
        <position position="182"/>
    </location>
    <ligand>
        <name>heme b</name>
        <dbReference type="ChEBI" id="CHEBI:60344"/>
        <label>b562</label>
    </ligand>
    <ligandPart>
        <name>Fe</name>
        <dbReference type="ChEBI" id="CHEBI:18248"/>
    </ligandPart>
</feature>
<feature type="binding site" description="axial binding residue" evidence="2">
    <location>
        <position position="196"/>
    </location>
    <ligand>
        <name>heme b</name>
        <dbReference type="ChEBI" id="CHEBI:60344"/>
        <label>b566</label>
    </ligand>
    <ligandPart>
        <name>Fe</name>
        <dbReference type="ChEBI" id="CHEBI:18248"/>
    </ligandPart>
</feature>
<feature type="binding site" evidence="2">
    <location>
        <position position="201"/>
    </location>
    <ligand>
        <name>a ubiquinone</name>
        <dbReference type="ChEBI" id="CHEBI:16389"/>
    </ligand>
</feature>
<keyword id="KW-0249">Electron transport</keyword>
<keyword id="KW-0349">Heme</keyword>
<keyword id="KW-0408">Iron</keyword>
<keyword id="KW-0472">Membrane</keyword>
<keyword id="KW-0479">Metal-binding</keyword>
<keyword id="KW-0496">Mitochondrion</keyword>
<keyword id="KW-0999">Mitochondrion inner membrane</keyword>
<keyword id="KW-0679">Respiratory chain</keyword>
<keyword id="KW-0812">Transmembrane</keyword>
<keyword id="KW-1133">Transmembrane helix</keyword>
<keyword id="KW-0813">Transport</keyword>
<keyword id="KW-0830">Ubiquinone</keyword>
<evidence type="ECO:0000250" key="1"/>
<evidence type="ECO:0000250" key="2">
    <source>
        <dbReference type="UniProtKB" id="P00157"/>
    </source>
</evidence>
<evidence type="ECO:0000255" key="3">
    <source>
        <dbReference type="PROSITE-ProRule" id="PRU00967"/>
    </source>
</evidence>
<evidence type="ECO:0000255" key="4">
    <source>
        <dbReference type="PROSITE-ProRule" id="PRU00968"/>
    </source>
</evidence>
<accession>Q9GAR6</accession>
<sequence length="379" mass="42469">MKILRKNHPLLKIVNHSFIDLPTPSNISSWWNFGSLLGMCLVIQILTGLFLAMHYTSDTATAFSSVAHICRDVNYGWLIRYLHANGASMFFICLFIHVGRGIYYGSYVLSETWNIGIILLLTTMATAFVGYVLPWGQMSFWGATVITNLLSAIPYIGSTLVEWIWGGFSVDKATLTRFFAFHFILPFIIAAFALVHLLFLHETGSNNPSGLNSDSDKIPFHPYYTIKDLLGIFLLLLVLMTLALFFPDVLGDPDNFTPANPLNTPAHIKPEWYFLFAYAILRSIPNKLGGVLALVLSILILAAFPLLNTSKQHGLIFRPVTQTIYWIFIANLLVLTWIGGQPVEYPFTTIGQIASITYFTIIIILIPVSNTIENNIIKL</sequence>
<reference key="1">
    <citation type="journal article" date="2001" name="J. Mammal.">
        <title>Diversification in the genus Akodon (Rodentia: Sigmodontinae) in southeastern South America: mitochondrial DNA sequence analysis.</title>
        <authorList>
            <person name="Geise L."/>
            <person name="Smith M.F."/>
            <person name="Patton J.L."/>
        </authorList>
    </citation>
    <scope>NUCLEOTIDE SEQUENCE [GENOMIC DNA]</scope>
</reference>
<geneLocation type="mitochondrion"/>
<gene>
    <name type="primary">MT-CYB</name>
    <name type="synonym">COB</name>
    <name type="synonym">CYTB</name>
    <name type="synonym">MTCYB</name>
</gene>
<organism>
    <name type="scientific">Akodon lindberghi</name>
    <name type="common">Lindbergh's grass mouse</name>
    <dbReference type="NCBI Taxonomy" id="106110"/>
    <lineage>
        <taxon>Eukaryota</taxon>
        <taxon>Metazoa</taxon>
        <taxon>Chordata</taxon>
        <taxon>Craniata</taxon>
        <taxon>Vertebrata</taxon>
        <taxon>Euteleostomi</taxon>
        <taxon>Mammalia</taxon>
        <taxon>Eutheria</taxon>
        <taxon>Euarchontoglires</taxon>
        <taxon>Glires</taxon>
        <taxon>Rodentia</taxon>
        <taxon>Myomorpha</taxon>
        <taxon>Muroidea</taxon>
        <taxon>Cricetidae</taxon>
        <taxon>Sigmodontinae</taxon>
        <taxon>Akodon</taxon>
    </lineage>
</organism>
<proteinExistence type="inferred from homology"/>
<dbReference type="EMBL" id="AF184057">
    <property type="protein sequence ID" value="AAG16971.2"/>
    <property type="molecule type" value="Genomic_DNA"/>
</dbReference>
<dbReference type="SMR" id="Q9GAR6"/>
<dbReference type="GO" id="GO:0005743">
    <property type="term" value="C:mitochondrial inner membrane"/>
    <property type="evidence" value="ECO:0007669"/>
    <property type="project" value="UniProtKB-SubCell"/>
</dbReference>
<dbReference type="GO" id="GO:0045275">
    <property type="term" value="C:respiratory chain complex III"/>
    <property type="evidence" value="ECO:0007669"/>
    <property type="project" value="InterPro"/>
</dbReference>
<dbReference type="GO" id="GO:0046872">
    <property type="term" value="F:metal ion binding"/>
    <property type="evidence" value="ECO:0007669"/>
    <property type="project" value="UniProtKB-KW"/>
</dbReference>
<dbReference type="GO" id="GO:0008121">
    <property type="term" value="F:ubiquinol-cytochrome-c reductase activity"/>
    <property type="evidence" value="ECO:0007669"/>
    <property type="project" value="InterPro"/>
</dbReference>
<dbReference type="GO" id="GO:0006122">
    <property type="term" value="P:mitochondrial electron transport, ubiquinol to cytochrome c"/>
    <property type="evidence" value="ECO:0007669"/>
    <property type="project" value="TreeGrafter"/>
</dbReference>
<dbReference type="CDD" id="cd00290">
    <property type="entry name" value="cytochrome_b_C"/>
    <property type="match status" value="1"/>
</dbReference>
<dbReference type="CDD" id="cd00284">
    <property type="entry name" value="Cytochrome_b_N"/>
    <property type="match status" value="1"/>
</dbReference>
<dbReference type="FunFam" id="1.20.810.10:FF:000002">
    <property type="entry name" value="Cytochrome b"/>
    <property type="match status" value="1"/>
</dbReference>
<dbReference type="Gene3D" id="1.20.810.10">
    <property type="entry name" value="Cytochrome Bc1 Complex, Chain C"/>
    <property type="match status" value="1"/>
</dbReference>
<dbReference type="InterPro" id="IPR005798">
    <property type="entry name" value="Cyt_b/b6_C"/>
</dbReference>
<dbReference type="InterPro" id="IPR036150">
    <property type="entry name" value="Cyt_b/b6_C_sf"/>
</dbReference>
<dbReference type="InterPro" id="IPR005797">
    <property type="entry name" value="Cyt_b/b6_N"/>
</dbReference>
<dbReference type="InterPro" id="IPR027387">
    <property type="entry name" value="Cytb/b6-like_sf"/>
</dbReference>
<dbReference type="InterPro" id="IPR030689">
    <property type="entry name" value="Cytochrome_b"/>
</dbReference>
<dbReference type="InterPro" id="IPR048260">
    <property type="entry name" value="Cytochrome_b_C_euk/bac"/>
</dbReference>
<dbReference type="InterPro" id="IPR048259">
    <property type="entry name" value="Cytochrome_b_N_euk/bac"/>
</dbReference>
<dbReference type="InterPro" id="IPR016174">
    <property type="entry name" value="Di-haem_cyt_TM"/>
</dbReference>
<dbReference type="PANTHER" id="PTHR19271">
    <property type="entry name" value="CYTOCHROME B"/>
    <property type="match status" value="1"/>
</dbReference>
<dbReference type="PANTHER" id="PTHR19271:SF16">
    <property type="entry name" value="CYTOCHROME B"/>
    <property type="match status" value="1"/>
</dbReference>
<dbReference type="Pfam" id="PF00032">
    <property type="entry name" value="Cytochrom_B_C"/>
    <property type="match status" value="1"/>
</dbReference>
<dbReference type="Pfam" id="PF00033">
    <property type="entry name" value="Cytochrome_B"/>
    <property type="match status" value="1"/>
</dbReference>
<dbReference type="PIRSF" id="PIRSF038885">
    <property type="entry name" value="COB"/>
    <property type="match status" value="1"/>
</dbReference>
<dbReference type="SUPFAM" id="SSF81648">
    <property type="entry name" value="a domain/subunit of cytochrome bc1 complex (Ubiquinol-cytochrome c reductase)"/>
    <property type="match status" value="1"/>
</dbReference>
<dbReference type="SUPFAM" id="SSF81342">
    <property type="entry name" value="Transmembrane di-heme cytochromes"/>
    <property type="match status" value="1"/>
</dbReference>
<dbReference type="PROSITE" id="PS51003">
    <property type="entry name" value="CYTB_CTER"/>
    <property type="match status" value="1"/>
</dbReference>
<dbReference type="PROSITE" id="PS51002">
    <property type="entry name" value="CYTB_NTER"/>
    <property type="match status" value="1"/>
</dbReference>
<comment type="function">
    <text evidence="2">Component of the ubiquinol-cytochrome c reductase complex (complex III or cytochrome b-c1 complex) that is part of the mitochondrial respiratory chain. The b-c1 complex mediates electron transfer from ubiquinol to cytochrome c. Contributes to the generation of a proton gradient across the mitochondrial membrane that is then used for ATP synthesis.</text>
</comment>
<comment type="cofactor">
    <cofactor evidence="2">
        <name>heme b</name>
        <dbReference type="ChEBI" id="CHEBI:60344"/>
    </cofactor>
    <text evidence="2">Binds 2 heme b groups non-covalently.</text>
</comment>
<comment type="subunit">
    <text evidence="2">The cytochrome bc1 complex contains 11 subunits: 3 respiratory subunits (MT-CYB, CYC1 and UQCRFS1), 2 core proteins (UQCRC1 and UQCRC2) and 6 low-molecular weight proteins (UQCRH/QCR6, UQCRB/QCR7, UQCRQ/QCR8, UQCR10/QCR9, UQCR11/QCR10 and a cleavage product of UQCRFS1). This cytochrome bc1 complex then forms a dimer.</text>
</comment>
<comment type="subcellular location">
    <subcellularLocation>
        <location evidence="2">Mitochondrion inner membrane</location>
        <topology evidence="2">Multi-pass membrane protein</topology>
    </subcellularLocation>
</comment>
<comment type="miscellaneous">
    <text evidence="1">Heme 1 (or BL or b562) is low-potential and absorbs at about 562 nm, and heme 2 (or BH or b566) is high-potential and absorbs at about 566 nm.</text>
</comment>
<comment type="similarity">
    <text evidence="3 4">Belongs to the cytochrome b family.</text>
</comment>
<comment type="caution">
    <text evidence="2">The full-length protein contains only eight transmembrane helices, not nine as predicted by bioinformatics tools.</text>
</comment>
<protein>
    <recommendedName>
        <fullName>Cytochrome b</fullName>
    </recommendedName>
    <alternativeName>
        <fullName>Complex III subunit 3</fullName>
    </alternativeName>
    <alternativeName>
        <fullName>Complex III subunit III</fullName>
    </alternativeName>
    <alternativeName>
        <fullName>Cytochrome b-c1 complex subunit 3</fullName>
    </alternativeName>
    <alternativeName>
        <fullName>Ubiquinol-cytochrome-c reductase complex cytochrome b subunit</fullName>
    </alternativeName>
</protein>